<gene>
    <name type="ordered locus">Bcep18194_B1458</name>
</gene>
<keyword id="KW-0058">Aromatic hydrocarbons catabolism</keyword>
<keyword id="KW-0520">NAD</keyword>
<keyword id="KW-0560">Oxidoreductase</keyword>
<sequence>MKKIKCALIGPGNIGTDLLYKLRRSTVLEPVWMVGVDPASDGLARAREFGLKTTDKGVDGLLPHVAADEIRIAFDATSAYVHRDNSDKLTALGVKMIDLTPAAIGPYCVPPVNLDAHLDSAQTNVNMVTCGGQATIPMVYAVSRVQPVAYGEIVATVSSRSVGPGTRKNIDEFTRTTSGAIEQVGGARKGKAIIVINPAEPPLIMRDTIHCLTDGPPDVDAITASVHAMVKEVQRYVPGYTLKNGPVFDGNRVSVFMEVEGLGDYLPKYAGNLDIMTAAAAATAERFAEQMLAATAATA</sequence>
<evidence type="ECO:0000255" key="1">
    <source>
        <dbReference type="HAMAP-Rule" id="MF_01657"/>
    </source>
</evidence>
<reference key="1">
    <citation type="submission" date="2005-10" db="EMBL/GenBank/DDBJ databases">
        <title>Complete sequence of chromosome 2 of Burkholderia sp. 383.</title>
        <authorList>
            <consortium name="US DOE Joint Genome Institute"/>
            <person name="Copeland A."/>
            <person name="Lucas S."/>
            <person name="Lapidus A."/>
            <person name="Barry K."/>
            <person name="Detter J.C."/>
            <person name="Glavina T."/>
            <person name="Hammon N."/>
            <person name="Israni S."/>
            <person name="Pitluck S."/>
            <person name="Chain P."/>
            <person name="Malfatti S."/>
            <person name="Shin M."/>
            <person name="Vergez L."/>
            <person name="Schmutz J."/>
            <person name="Larimer F."/>
            <person name="Land M."/>
            <person name="Kyrpides N."/>
            <person name="Lykidis A."/>
            <person name="Richardson P."/>
        </authorList>
    </citation>
    <scope>NUCLEOTIDE SEQUENCE [LARGE SCALE GENOMIC DNA]</scope>
    <source>
        <strain>ATCC 17760 / DSM 23089 / LMG 22485 / NCIMB 9086 / R18194 / 383</strain>
    </source>
</reference>
<name>ACDH2_BURL3</name>
<organism>
    <name type="scientific">Burkholderia lata (strain ATCC 17760 / DSM 23089 / LMG 22485 / NCIMB 9086 / R18194 / 383)</name>
    <dbReference type="NCBI Taxonomy" id="482957"/>
    <lineage>
        <taxon>Bacteria</taxon>
        <taxon>Pseudomonadati</taxon>
        <taxon>Pseudomonadota</taxon>
        <taxon>Betaproteobacteria</taxon>
        <taxon>Burkholderiales</taxon>
        <taxon>Burkholderiaceae</taxon>
        <taxon>Burkholderia</taxon>
        <taxon>Burkholderia cepacia complex</taxon>
    </lineage>
</organism>
<protein>
    <recommendedName>
        <fullName evidence="1">Acetaldehyde dehydrogenase 2</fullName>
        <ecNumber evidence="1">1.2.1.10</ecNumber>
    </recommendedName>
    <alternativeName>
        <fullName evidence="1">Acetaldehyde dehydrogenase [acetylating] 2</fullName>
    </alternativeName>
</protein>
<comment type="catalytic activity">
    <reaction evidence="1">
        <text>acetaldehyde + NAD(+) + CoA = acetyl-CoA + NADH + H(+)</text>
        <dbReference type="Rhea" id="RHEA:23288"/>
        <dbReference type="ChEBI" id="CHEBI:15343"/>
        <dbReference type="ChEBI" id="CHEBI:15378"/>
        <dbReference type="ChEBI" id="CHEBI:57287"/>
        <dbReference type="ChEBI" id="CHEBI:57288"/>
        <dbReference type="ChEBI" id="CHEBI:57540"/>
        <dbReference type="ChEBI" id="CHEBI:57945"/>
        <dbReference type="EC" id="1.2.1.10"/>
    </reaction>
</comment>
<comment type="similarity">
    <text evidence="1">Belongs to the acetaldehyde dehydrogenase family.</text>
</comment>
<dbReference type="EC" id="1.2.1.10" evidence="1"/>
<dbReference type="EMBL" id="CP000152">
    <property type="protein sequence ID" value="ABB11572.1"/>
    <property type="molecule type" value="Genomic_DNA"/>
</dbReference>
<dbReference type="RefSeq" id="WP_011355061.1">
    <property type="nucleotide sequence ID" value="NC_007511.1"/>
</dbReference>
<dbReference type="SMR" id="Q396N9"/>
<dbReference type="GeneID" id="45097804"/>
<dbReference type="KEGG" id="bur:Bcep18194_B1458"/>
<dbReference type="PATRIC" id="fig|482957.22.peg.5154"/>
<dbReference type="HOGENOM" id="CLU_062208_0_0_4"/>
<dbReference type="Proteomes" id="UP000002705">
    <property type="component" value="Chromosome 2"/>
</dbReference>
<dbReference type="GO" id="GO:0008774">
    <property type="term" value="F:acetaldehyde dehydrogenase (acetylating) activity"/>
    <property type="evidence" value="ECO:0007669"/>
    <property type="project" value="UniProtKB-UniRule"/>
</dbReference>
<dbReference type="GO" id="GO:0051287">
    <property type="term" value="F:NAD binding"/>
    <property type="evidence" value="ECO:0007669"/>
    <property type="project" value="UniProtKB-UniRule"/>
</dbReference>
<dbReference type="GO" id="GO:0009056">
    <property type="term" value="P:catabolic process"/>
    <property type="evidence" value="ECO:0007669"/>
    <property type="project" value="UniProtKB-KW"/>
</dbReference>
<dbReference type="CDD" id="cd23933">
    <property type="entry name" value="ALDH_C"/>
    <property type="match status" value="1"/>
</dbReference>
<dbReference type="Gene3D" id="3.30.360.10">
    <property type="entry name" value="Dihydrodipicolinate Reductase, domain 2"/>
    <property type="match status" value="1"/>
</dbReference>
<dbReference type="Gene3D" id="3.40.50.720">
    <property type="entry name" value="NAD(P)-binding Rossmann-like Domain"/>
    <property type="match status" value="1"/>
</dbReference>
<dbReference type="HAMAP" id="MF_01657">
    <property type="entry name" value="Ac_ald_DH_ac"/>
    <property type="match status" value="1"/>
</dbReference>
<dbReference type="InterPro" id="IPR003361">
    <property type="entry name" value="Acetaldehyde_dehydrogenase"/>
</dbReference>
<dbReference type="InterPro" id="IPR015426">
    <property type="entry name" value="Acetylaldehyde_DH_C"/>
</dbReference>
<dbReference type="InterPro" id="IPR036291">
    <property type="entry name" value="NAD(P)-bd_dom_sf"/>
</dbReference>
<dbReference type="InterPro" id="IPR000534">
    <property type="entry name" value="Semialdehyde_DH_NAD-bd"/>
</dbReference>
<dbReference type="NCBIfam" id="TIGR03215">
    <property type="entry name" value="ac_ald_DH_ac"/>
    <property type="match status" value="1"/>
</dbReference>
<dbReference type="NCBIfam" id="NF006157">
    <property type="entry name" value="PRK08300.1"/>
    <property type="match status" value="1"/>
</dbReference>
<dbReference type="Pfam" id="PF09290">
    <property type="entry name" value="AcetDehyd-dimer"/>
    <property type="match status" value="1"/>
</dbReference>
<dbReference type="PIRSF" id="PIRSF015689">
    <property type="entry name" value="Actaldh_dh_actl"/>
    <property type="match status" value="1"/>
</dbReference>
<dbReference type="SMART" id="SM00859">
    <property type="entry name" value="Semialdhyde_dh"/>
    <property type="match status" value="1"/>
</dbReference>
<dbReference type="SUPFAM" id="SSF55347">
    <property type="entry name" value="Glyceraldehyde-3-phosphate dehydrogenase-like, C-terminal domain"/>
    <property type="match status" value="1"/>
</dbReference>
<dbReference type="SUPFAM" id="SSF51735">
    <property type="entry name" value="NAD(P)-binding Rossmann-fold domains"/>
    <property type="match status" value="1"/>
</dbReference>
<proteinExistence type="inferred from homology"/>
<feature type="chain" id="PRO_0000387639" description="Acetaldehyde dehydrogenase 2">
    <location>
        <begin position="1"/>
        <end position="299"/>
    </location>
</feature>
<feature type="active site" description="Acyl-thioester intermediate" evidence="1">
    <location>
        <position position="130"/>
    </location>
</feature>
<feature type="binding site" evidence="1">
    <location>
        <begin position="161"/>
        <end position="169"/>
    </location>
    <ligand>
        <name>NAD(+)</name>
        <dbReference type="ChEBI" id="CHEBI:57540"/>
    </ligand>
</feature>
<feature type="binding site" evidence="1">
    <location>
        <position position="272"/>
    </location>
    <ligand>
        <name>NAD(+)</name>
        <dbReference type="ChEBI" id="CHEBI:57540"/>
    </ligand>
</feature>
<accession>Q396N9</accession>